<name>HEXA_CAEBR</name>
<gene>
    <name evidence="3" type="primary">hex-1</name>
    <name type="ORF">CBG14058</name>
</gene>
<organism>
    <name type="scientific">Caenorhabditis briggsae</name>
    <dbReference type="NCBI Taxonomy" id="6238"/>
    <lineage>
        <taxon>Eukaryota</taxon>
        <taxon>Metazoa</taxon>
        <taxon>Ecdysozoa</taxon>
        <taxon>Nematoda</taxon>
        <taxon>Chromadorea</taxon>
        <taxon>Rhabditida</taxon>
        <taxon>Rhabditina</taxon>
        <taxon>Rhabditomorpha</taxon>
        <taxon>Rhabditoidea</taxon>
        <taxon>Rhabditidae</taxon>
        <taxon>Peloderinae</taxon>
        <taxon>Caenorhabditis</taxon>
    </lineage>
</organism>
<reference key="1">
    <citation type="journal article" date="2003" name="PLoS Biol.">
        <title>The genome sequence of Caenorhabditis briggsae: a platform for comparative genomics.</title>
        <authorList>
            <person name="Stein L.D."/>
            <person name="Bao Z."/>
            <person name="Blasiar D."/>
            <person name="Blumenthal T."/>
            <person name="Brent M.R."/>
            <person name="Chen N."/>
            <person name="Chinwalla A."/>
            <person name="Clarke L."/>
            <person name="Clee C."/>
            <person name="Coghlan A."/>
            <person name="Coulson A."/>
            <person name="D'Eustachio P."/>
            <person name="Fitch D.H.A."/>
            <person name="Fulton L.A."/>
            <person name="Fulton R.E."/>
            <person name="Griffiths-Jones S."/>
            <person name="Harris T.W."/>
            <person name="Hillier L.W."/>
            <person name="Kamath R."/>
            <person name="Kuwabara P.E."/>
            <person name="Mardis E.R."/>
            <person name="Marra M.A."/>
            <person name="Miner T.L."/>
            <person name="Minx P."/>
            <person name="Mullikin J.C."/>
            <person name="Plumb R.W."/>
            <person name="Rogers J."/>
            <person name="Schein J.E."/>
            <person name="Sohrmann M."/>
            <person name="Spieth J."/>
            <person name="Stajich J.E."/>
            <person name="Wei C."/>
            <person name="Willey D."/>
            <person name="Wilson R.K."/>
            <person name="Durbin R.M."/>
            <person name="Waterston R.H."/>
        </authorList>
    </citation>
    <scope>NUCLEOTIDE SEQUENCE [LARGE SCALE GENOMIC DNA]</scope>
    <source>
        <strain>AF16</strain>
    </source>
</reference>
<proteinExistence type="inferred from homology"/>
<accession>Q619W7</accession>
<accession>A8XJ97</accession>
<comment type="function">
    <text evidence="3">Responsible for the degradation of GM2 gangliosides, and a variety of other molecules containing terminal N-acetyl hexosamines. Degrades chitotriose (By similarity).</text>
</comment>
<comment type="catalytic activity">
    <reaction evidence="2">
        <text>Hydrolysis of terminal non-reducing N-acetyl-D-hexosamine residues in N-acetyl-beta-D-hexosaminides.</text>
        <dbReference type="EC" id="3.2.1.52"/>
    </reaction>
</comment>
<comment type="subcellular location">
    <subcellularLocation>
        <location evidence="2">Lysosome</location>
    </subcellularLocation>
</comment>
<comment type="similarity">
    <text evidence="4">Belongs to the glycosyl hydrolase 20 family.</text>
</comment>
<sequence>MRLIVLSLLFTSTLAWFYGRDEPDRWSVGGVWPLPQKIIYGSKNRTLTYDKIGIDLGDKKDCDVLLAMADNYMNKWLFPYPVEMKTGGTEDFIITVTVKEECPGGPPVHGASEEYLLRVSVSEAVINAQTVWGALRAMETLSHLVFYDQKSQEYQIRTAEIFDKPRFPVRGIMIDSSRHFLSLNVIKRQLEIMSMNKLNVLHWHLVDSESFPYTSQKFPELHGVGAYSPRHVYSREDISEVIAFARLRGIRVIPEFDLPGHTSSWKGRKGFLTECFDEKGEETFLPNLVDPMNDANFDFLAEFLEEVTETFPDQFLHLGGDEVSDYIVECWVRNKKIRKFMDEKGFGNNTVLLENYFFEKLFSIVEKLKLKRKPIFWQEVFDNNIPDPNSIIHIWKGNTHEEIYEQVKNITSKNFPVIVSACWYLNYIKYGADWRDEIRGTAPSNSRYYYCDPTSFNGTDTQKNLVLGGIAAIWGELVDNTNIEARLWPRASAAAERLWSPAEKTQKAENAWPRMHELRCRLVSRGYRIQPNNNPDYCPFEFDEPPATKSEL</sequence>
<dbReference type="EC" id="3.2.1.52"/>
<dbReference type="EMBL" id="HE600983">
    <property type="protein sequence ID" value="CAP32722.2"/>
    <property type="molecule type" value="Genomic_DNA"/>
</dbReference>
<dbReference type="SMR" id="Q619W7"/>
<dbReference type="FunCoup" id="Q619W7">
    <property type="interactions" value="900"/>
</dbReference>
<dbReference type="STRING" id="6238.Q619W7"/>
<dbReference type="GlyCosmos" id="Q619W7">
    <property type="glycosylation" value="4 sites, No reported glycans"/>
</dbReference>
<dbReference type="EnsemblMetazoa" id="CBG14058.1">
    <property type="protein sequence ID" value="CBG14058.1"/>
    <property type="gene ID" value="WBGene00034691"/>
</dbReference>
<dbReference type="WormBase" id="CBG14058">
    <property type="protein sequence ID" value="CBP29009"/>
    <property type="gene ID" value="WBGene00034691"/>
    <property type="gene designation" value="Cbr-hex-1"/>
</dbReference>
<dbReference type="eggNOG" id="KOG2499">
    <property type="taxonomic scope" value="Eukaryota"/>
</dbReference>
<dbReference type="HOGENOM" id="CLU_007082_0_2_1"/>
<dbReference type="InParanoid" id="Q619W7"/>
<dbReference type="OMA" id="GHDVVMC"/>
<dbReference type="Proteomes" id="UP000008549">
    <property type="component" value="Unassembled WGS sequence"/>
</dbReference>
<dbReference type="GO" id="GO:0005764">
    <property type="term" value="C:lysosome"/>
    <property type="evidence" value="ECO:0000318"/>
    <property type="project" value="GO_Central"/>
</dbReference>
<dbReference type="GO" id="GO:0016020">
    <property type="term" value="C:membrane"/>
    <property type="evidence" value="ECO:0000318"/>
    <property type="project" value="GO_Central"/>
</dbReference>
<dbReference type="GO" id="GO:0004563">
    <property type="term" value="F:beta-N-acetylhexosaminidase activity"/>
    <property type="evidence" value="ECO:0000250"/>
    <property type="project" value="UniProtKB"/>
</dbReference>
<dbReference type="GO" id="GO:0005975">
    <property type="term" value="P:carbohydrate metabolic process"/>
    <property type="evidence" value="ECO:0000250"/>
    <property type="project" value="UniProtKB"/>
</dbReference>
<dbReference type="GO" id="GO:0030203">
    <property type="term" value="P:glycosaminoglycan metabolic process"/>
    <property type="evidence" value="ECO:0000318"/>
    <property type="project" value="GO_Central"/>
</dbReference>
<dbReference type="GO" id="GO:0006491">
    <property type="term" value="P:N-glycan processing"/>
    <property type="evidence" value="ECO:0000318"/>
    <property type="project" value="GO_Central"/>
</dbReference>
<dbReference type="CDD" id="cd06562">
    <property type="entry name" value="GH20_HexA_HexB-like"/>
    <property type="match status" value="1"/>
</dbReference>
<dbReference type="FunFam" id="3.20.20.80:FF:000063">
    <property type="entry name" value="Beta-hexosaminidase"/>
    <property type="match status" value="1"/>
</dbReference>
<dbReference type="Gene3D" id="3.30.379.10">
    <property type="entry name" value="Chitobiase/beta-hexosaminidase domain 2-like"/>
    <property type="match status" value="1"/>
</dbReference>
<dbReference type="Gene3D" id="3.20.20.80">
    <property type="entry name" value="Glycosidases"/>
    <property type="match status" value="1"/>
</dbReference>
<dbReference type="InterPro" id="IPR025705">
    <property type="entry name" value="Beta_hexosaminidase_sua/sub"/>
</dbReference>
<dbReference type="InterPro" id="IPR015883">
    <property type="entry name" value="Glyco_hydro_20_cat"/>
</dbReference>
<dbReference type="InterPro" id="IPR017853">
    <property type="entry name" value="Glycoside_hydrolase_SF"/>
</dbReference>
<dbReference type="InterPro" id="IPR029018">
    <property type="entry name" value="Hex-like_dom2"/>
</dbReference>
<dbReference type="InterPro" id="IPR029019">
    <property type="entry name" value="HEX_eukaryotic_N"/>
</dbReference>
<dbReference type="PANTHER" id="PTHR22600">
    <property type="entry name" value="BETA-HEXOSAMINIDASE"/>
    <property type="match status" value="1"/>
</dbReference>
<dbReference type="PANTHER" id="PTHR22600:SF21">
    <property type="entry name" value="BETA-HEXOSAMINIDASE A"/>
    <property type="match status" value="1"/>
</dbReference>
<dbReference type="Pfam" id="PF00728">
    <property type="entry name" value="Glyco_hydro_20"/>
    <property type="match status" value="1"/>
</dbReference>
<dbReference type="Pfam" id="PF14845">
    <property type="entry name" value="Glycohydro_20b2"/>
    <property type="match status" value="1"/>
</dbReference>
<dbReference type="PIRSF" id="PIRSF001093">
    <property type="entry name" value="B-hxosamndse_ab_euk"/>
    <property type="match status" value="1"/>
</dbReference>
<dbReference type="PRINTS" id="PR00738">
    <property type="entry name" value="GLHYDRLASE20"/>
</dbReference>
<dbReference type="SUPFAM" id="SSF51445">
    <property type="entry name" value="(Trans)glycosidases"/>
    <property type="match status" value="1"/>
</dbReference>
<dbReference type="SUPFAM" id="SSF55545">
    <property type="entry name" value="beta-N-acetylhexosaminidase-like domain"/>
    <property type="match status" value="1"/>
</dbReference>
<protein>
    <recommendedName>
        <fullName>Beta-hexosaminidase A</fullName>
        <ecNumber>3.2.1.52</ecNumber>
    </recommendedName>
    <alternativeName>
        <fullName>Beta-N-acetylhexosaminidase</fullName>
    </alternativeName>
    <alternativeName>
        <fullName>N-acetyl-beta-glucosaminidase</fullName>
    </alternativeName>
</protein>
<evidence type="ECO:0000250" key="1"/>
<evidence type="ECO:0000250" key="2">
    <source>
        <dbReference type="UniProtKB" id="P06865"/>
    </source>
</evidence>
<evidence type="ECO:0000250" key="3">
    <source>
        <dbReference type="UniProtKB" id="Q22492"/>
    </source>
</evidence>
<evidence type="ECO:0000255" key="4"/>
<keyword id="KW-0325">Glycoprotein</keyword>
<keyword id="KW-0326">Glycosidase</keyword>
<keyword id="KW-0378">Hydrolase</keyword>
<keyword id="KW-0458">Lysosome</keyword>
<keyword id="KW-1185">Reference proteome</keyword>
<keyword id="KW-0732">Signal</keyword>
<feature type="signal peptide" evidence="4">
    <location>
        <begin position="1"/>
        <end position="15"/>
    </location>
</feature>
<feature type="chain" id="PRO_0000312664" description="Beta-hexosaminidase A">
    <location>
        <begin position="16"/>
        <end position="552"/>
    </location>
</feature>
<feature type="active site" description="Proton donor" evidence="1">
    <location>
        <position position="322"/>
    </location>
</feature>
<feature type="glycosylation site" description="N-linked (GlcNAc...) asparagine" evidence="4">
    <location>
        <position position="44"/>
    </location>
</feature>
<feature type="glycosylation site" description="N-linked (GlcNAc...) asparagine" evidence="4">
    <location>
        <position position="348"/>
    </location>
</feature>
<feature type="glycosylation site" description="N-linked (GlcNAc...) asparagine" evidence="4">
    <location>
        <position position="409"/>
    </location>
</feature>
<feature type="glycosylation site" description="N-linked (GlcNAc...) asparagine" evidence="4">
    <location>
        <position position="457"/>
    </location>
</feature>